<evidence type="ECO:0000250" key="1"/>
<evidence type="ECO:0000305" key="2"/>
<gene>
    <name type="primary">Ahcy13</name>
    <name type="ORF">AGAP000719</name>
</gene>
<comment type="function">
    <text evidence="1">Adenosylhomocysteine is a competitive inhibitor of S-adenosyl-L-methionine-dependent methyl transferase reactions; therefore adenosylhomocysteinase may play a key role in the control of methylations via regulation of the intracellular concentration of adenosylhomocysteine.</text>
</comment>
<comment type="catalytic activity">
    <reaction>
        <text>S-adenosyl-L-homocysteine + H2O = L-homocysteine + adenosine</text>
        <dbReference type="Rhea" id="RHEA:21708"/>
        <dbReference type="ChEBI" id="CHEBI:15377"/>
        <dbReference type="ChEBI" id="CHEBI:16335"/>
        <dbReference type="ChEBI" id="CHEBI:57856"/>
        <dbReference type="ChEBI" id="CHEBI:58199"/>
        <dbReference type="EC" id="3.13.2.1"/>
    </reaction>
</comment>
<comment type="cofactor">
    <cofactor evidence="1">
        <name>NAD(+)</name>
        <dbReference type="ChEBI" id="CHEBI:57540"/>
    </cofactor>
    <text evidence="1">Binds 1 NAD(+) per subunit.</text>
</comment>
<comment type="pathway">
    <text>Amino-acid biosynthesis; L-homocysteine biosynthesis; L-homocysteine from S-adenosyl-L-homocysteine: step 1/1.</text>
</comment>
<comment type="similarity">
    <text evidence="2">Belongs to the adenosylhomocysteinase family.</text>
</comment>
<organism>
    <name type="scientific">Anopheles gambiae</name>
    <name type="common">African malaria mosquito</name>
    <dbReference type="NCBI Taxonomy" id="7165"/>
    <lineage>
        <taxon>Eukaryota</taxon>
        <taxon>Metazoa</taxon>
        <taxon>Ecdysozoa</taxon>
        <taxon>Arthropoda</taxon>
        <taxon>Hexapoda</taxon>
        <taxon>Insecta</taxon>
        <taxon>Pterygota</taxon>
        <taxon>Neoptera</taxon>
        <taxon>Endopterygota</taxon>
        <taxon>Diptera</taxon>
        <taxon>Nematocera</taxon>
        <taxon>Culicoidea</taxon>
        <taxon>Culicidae</taxon>
        <taxon>Anophelinae</taxon>
        <taxon>Anopheles</taxon>
    </lineage>
</organism>
<name>SAHH_ANOGA</name>
<sequence>MAKPAYKVADISLAEFGRKEIVLAENEMPGLMACRQKYGPLKILKGARIAGCLHMTIQTAVLIETLIELGAEVQWSSCNIFSTQDHAAAAMAKAGVPVYAWKGETDEEYMWCIRQTLIFPDGKPLNMILDDGGDLTNLVHAEHPELLKEIRGLSEETTTGVHNLYKMFREGRLGMPAINVNDSVTKSKFDNLYGCRESLLDGIKRATDVMIAGKVCVVAGYGDVGKGCAQALRGSGGRVLITEIDPINALQAAMEGYEVTTMEEASKEAQIFVTTTGCTDIIMGEHFLNMKDDSIVCNIGHFDCEINVTWLQENAVEKVNIKPQVDRYRLANGNHIILLAEGRLVNLGCAMGHSSFVMSNSFTNQVLAQIELWTNREQYAIGVHVLPKKLDEEVAALHLDKLGVKLTKLSARQAEYLNLPAEGPYKPEHYRY</sequence>
<feature type="chain" id="PRO_0000116912" description="Adenosylhomocysteinase">
    <location>
        <begin position="1"/>
        <end position="432"/>
    </location>
</feature>
<feature type="binding site" evidence="1">
    <location>
        <position position="56"/>
    </location>
    <ligand>
        <name>substrate</name>
    </ligand>
</feature>
<feature type="binding site" evidence="1">
    <location>
        <position position="131"/>
    </location>
    <ligand>
        <name>substrate</name>
    </ligand>
</feature>
<feature type="binding site" evidence="1">
    <location>
        <position position="156"/>
    </location>
    <ligand>
        <name>substrate</name>
    </ligand>
</feature>
<feature type="binding site" evidence="1">
    <location>
        <begin position="157"/>
        <end position="159"/>
    </location>
    <ligand>
        <name>NAD(+)</name>
        <dbReference type="ChEBI" id="CHEBI:57540"/>
    </ligand>
</feature>
<feature type="binding site" evidence="1">
    <location>
        <position position="186"/>
    </location>
    <ligand>
        <name>substrate</name>
    </ligand>
</feature>
<feature type="binding site" evidence="1">
    <location>
        <position position="190"/>
    </location>
    <ligand>
        <name>substrate</name>
    </ligand>
</feature>
<feature type="binding site" evidence="1">
    <location>
        <position position="191"/>
    </location>
    <ligand>
        <name>NAD(+)</name>
        <dbReference type="ChEBI" id="CHEBI:57540"/>
    </ligand>
</feature>
<feature type="binding site" evidence="1">
    <location>
        <begin position="222"/>
        <end position="227"/>
    </location>
    <ligand>
        <name>NAD(+)</name>
        <dbReference type="ChEBI" id="CHEBI:57540"/>
    </ligand>
</feature>
<feature type="binding site" evidence="1">
    <location>
        <position position="243"/>
    </location>
    <ligand>
        <name>NAD(+)</name>
        <dbReference type="ChEBI" id="CHEBI:57540"/>
    </ligand>
</feature>
<feature type="binding site" evidence="1">
    <location>
        <begin position="299"/>
        <end position="301"/>
    </location>
    <ligand>
        <name>NAD(+)</name>
        <dbReference type="ChEBI" id="CHEBI:57540"/>
    </ligand>
</feature>
<feature type="binding site" evidence="1">
    <location>
        <position position="346"/>
    </location>
    <ligand>
        <name>NAD(+)</name>
        <dbReference type="ChEBI" id="CHEBI:57540"/>
    </ligand>
</feature>
<feature type="sequence conflict" description="In Ref. 1; AAC29475." evidence="2" ref="1">
    <original>K</original>
    <variation>R</variation>
    <location>
        <position position="45"/>
    </location>
</feature>
<feature type="sequence conflict" description="In Ref. 1; AAC29475." evidence="2" ref="1">
    <original>A</original>
    <variation>V</variation>
    <location>
        <position position="92"/>
    </location>
</feature>
<feature type="sequence conflict" description="In Ref. 1; AAC29475." evidence="2" ref="1">
    <original>Y</original>
    <variation>K</variation>
    <location>
        <position position="257"/>
    </location>
</feature>
<feature type="sequence conflict" description="In Ref. 1; AAC29475." evidence="2" ref="1">
    <original>E</original>
    <variation>D</variation>
    <location>
        <position position="392"/>
    </location>
</feature>
<feature type="sequence conflict" description="In Ref. 1; AAC29475." evidence="2" ref="1">
    <original>A</original>
    <variation>P</variation>
    <location>
        <position position="414"/>
    </location>
</feature>
<feature type="sequence conflict" description="In Ref. 1; AAC29475." evidence="2" ref="1">
    <original>A</original>
    <variation>V</variation>
    <location>
        <position position="421"/>
    </location>
</feature>
<reference key="1">
    <citation type="submission" date="1998-07" db="EMBL/GenBank/DDBJ databases">
        <title>The S-adenosyl-L-homocysteine hydrolase of Anopheles gambiae.</title>
        <authorList>
            <person name="Zhao Y."/>
            <person name="Lu W."/>
            <person name="Eggleston P."/>
        </authorList>
    </citation>
    <scope>NUCLEOTIDE SEQUENCE [MRNA]</scope>
    <source>
        <strain>G3</strain>
    </source>
</reference>
<reference key="2">
    <citation type="journal article" date="2002" name="Science">
        <title>The genome sequence of the malaria mosquito Anopheles gambiae.</title>
        <authorList>
            <person name="Holt R.A."/>
            <person name="Subramanian G.M."/>
            <person name="Halpern A."/>
            <person name="Sutton G.G."/>
            <person name="Charlab R."/>
            <person name="Nusskern D.R."/>
            <person name="Wincker P."/>
            <person name="Clark A.G."/>
            <person name="Ribeiro J.M.C."/>
            <person name="Wides R."/>
            <person name="Salzberg S.L."/>
            <person name="Loftus B.J."/>
            <person name="Yandell M.D."/>
            <person name="Majoros W.H."/>
            <person name="Rusch D.B."/>
            <person name="Lai Z."/>
            <person name="Kraft C.L."/>
            <person name="Abril J.F."/>
            <person name="Anthouard V."/>
            <person name="Arensburger P."/>
            <person name="Atkinson P.W."/>
            <person name="Baden H."/>
            <person name="de Berardinis V."/>
            <person name="Baldwin D."/>
            <person name="Benes V."/>
            <person name="Biedler J."/>
            <person name="Blass C."/>
            <person name="Bolanos R."/>
            <person name="Boscus D."/>
            <person name="Barnstead M."/>
            <person name="Cai S."/>
            <person name="Center A."/>
            <person name="Chaturverdi K."/>
            <person name="Christophides G.K."/>
            <person name="Chrystal M.A.M."/>
            <person name="Clamp M."/>
            <person name="Cravchik A."/>
            <person name="Curwen V."/>
            <person name="Dana A."/>
            <person name="Delcher A."/>
            <person name="Dew I."/>
            <person name="Evans C.A."/>
            <person name="Flanigan M."/>
            <person name="Grundschober-Freimoser A."/>
            <person name="Friedli L."/>
            <person name="Gu Z."/>
            <person name="Guan P."/>
            <person name="Guigo R."/>
            <person name="Hillenmeyer M.E."/>
            <person name="Hladun S.L."/>
            <person name="Hogan J.R."/>
            <person name="Hong Y.S."/>
            <person name="Hoover J."/>
            <person name="Jaillon O."/>
            <person name="Ke Z."/>
            <person name="Kodira C.D."/>
            <person name="Kokoza E."/>
            <person name="Koutsos A."/>
            <person name="Letunic I."/>
            <person name="Levitsky A.A."/>
            <person name="Liang Y."/>
            <person name="Lin J.-J."/>
            <person name="Lobo N.F."/>
            <person name="Lopez J.R."/>
            <person name="Malek J.A."/>
            <person name="McIntosh T.C."/>
            <person name="Meister S."/>
            <person name="Miller J.R."/>
            <person name="Mobarry C."/>
            <person name="Mongin E."/>
            <person name="Murphy S.D."/>
            <person name="O'Brochta D.A."/>
            <person name="Pfannkoch C."/>
            <person name="Qi R."/>
            <person name="Regier M.A."/>
            <person name="Remington K."/>
            <person name="Shao H."/>
            <person name="Sharakhova M.V."/>
            <person name="Sitter C.D."/>
            <person name="Shetty J."/>
            <person name="Smith T.J."/>
            <person name="Strong R."/>
            <person name="Sun J."/>
            <person name="Thomasova D."/>
            <person name="Ton L.Q."/>
            <person name="Topalis P."/>
            <person name="Tu Z.J."/>
            <person name="Unger M.F."/>
            <person name="Walenz B."/>
            <person name="Wang A.H."/>
            <person name="Wang J."/>
            <person name="Wang M."/>
            <person name="Wang X."/>
            <person name="Woodford K.J."/>
            <person name="Wortman J.R."/>
            <person name="Wu M."/>
            <person name="Yao A."/>
            <person name="Zdobnov E.M."/>
            <person name="Zhang H."/>
            <person name="Zhao Q."/>
            <person name="Zhao S."/>
            <person name="Zhu S.C."/>
            <person name="Zhimulev I."/>
            <person name="Coluzzi M."/>
            <person name="della Torre A."/>
            <person name="Roth C.W."/>
            <person name="Louis C."/>
            <person name="Kalush F."/>
            <person name="Mural R.J."/>
            <person name="Myers E.W."/>
            <person name="Adams M.D."/>
            <person name="Smith H.O."/>
            <person name="Broder S."/>
            <person name="Gardner M.J."/>
            <person name="Fraser C.M."/>
            <person name="Birney E."/>
            <person name="Bork P."/>
            <person name="Brey P.T."/>
            <person name="Venter J.C."/>
            <person name="Weissenbach J."/>
            <person name="Kafatos F.C."/>
            <person name="Collins F.H."/>
            <person name="Hoffman S.L."/>
        </authorList>
    </citation>
    <scope>NUCLEOTIDE SEQUENCE [LARGE SCALE GENOMIC DNA]</scope>
    <source>
        <strain>PEST</strain>
    </source>
</reference>
<proteinExistence type="evidence at transcript level"/>
<keyword id="KW-0378">Hydrolase</keyword>
<keyword id="KW-0520">NAD</keyword>
<keyword id="KW-0554">One-carbon metabolism</keyword>
<keyword id="KW-1185">Reference proteome</keyword>
<protein>
    <recommendedName>
        <fullName>Adenosylhomocysteinase</fullName>
        <shortName>AdoHcyase</shortName>
        <ecNumber>3.13.2.1</ecNumber>
    </recommendedName>
    <alternativeName>
        <fullName>S-adenosyl-L-homocysteine hydrolase</fullName>
    </alternativeName>
</protein>
<dbReference type="EC" id="3.13.2.1"/>
<dbReference type="EMBL" id="AF080546">
    <property type="protein sequence ID" value="AAC29475.1"/>
    <property type="molecule type" value="mRNA"/>
</dbReference>
<dbReference type="EMBL" id="AAAB01008847">
    <property type="protein sequence ID" value="EAA06909.2"/>
    <property type="molecule type" value="Genomic_DNA"/>
</dbReference>
<dbReference type="RefSeq" id="XP_311257.2">
    <property type="nucleotide sequence ID" value="XM_311257.4"/>
</dbReference>
<dbReference type="SMR" id="O76757"/>
<dbReference type="FunCoup" id="O76757">
    <property type="interactions" value="1391"/>
</dbReference>
<dbReference type="STRING" id="7165.O76757"/>
<dbReference type="PaxDb" id="7165-AGAP000719-PA"/>
<dbReference type="EnsemblMetazoa" id="AGAP000719-RA">
    <property type="protein sequence ID" value="AGAP000719-PA"/>
    <property type="gene ID" value="AGAP000719"/>
</dbReference>
<dbReference type="GeneID" id="1272312"/>
<dbReference type="KEGG" id="aga:1272312"/>
<dbReference type="VEuPathDB" id="VectorBase:AGAMI1_001125"/>
<dbReference type="VEuPathDB" id="VectorBase:AGAP000719"/>
<dbReference type="eggNOG" id="KOG1370">
    <property type="taxonomic scope" value="Eukaryota"/>
</dbReference>
<dbReference type="HOGENOM" id="CLU_025194_2_1_1"/>
<dbReference type="InParanoid" id="O76757"/>
<dbReference type="OMA" id="YIGVTVE"/>
<dbReference type="PhylomeDB" id="O76757"/>
<dbReference type="UniPathway" id="UPA00314">
    <property type="reaction ID" value="UER00076"/>
</dbReference>
<dbReference type="Proteomes" id="UP000007062">
    <property type="component" value="Chromosome X"/>
</dbReference>
<dbReference type="GO" id="GO:0005829">
    <property type="term" value="C:cytosol"/>
    <property type="evidence" value="ECO:0000318"/>
    <property type="project" value="GO_Central"/>
</dbReference>
<dbReference type="GO" id="GO:0004013">
    <property type="term" value="F:adenosylhomocysteinase activity"/>
    <property type="evidence" value="ECO:0000318"/>
    <property type="project" value="GO_Central"/>
</dbReference>
<dbReference type="GO" id="GO:0006730">
    <property type="term" value="P:one-carbon metabolic process"/>
    <property type="evidence" value="ECO:0007669"/>
    <property type="project" value="UniProtKB-KW"/>
</dbReference>
<dbReference type="GO" id="GO:0033353">
    <property type="term" value="P:S-adenosylmethionine cycle"/>
    <property type="evidence" value="ECO:0000318"/>
    <property type="project" value="GO_Central"/>
</dbReference>
<dbReference type="CDD" id="cd00401">
    <property type="entry name" value="SAHH"/>
    <property type="match status" value="1"/>
</dbReference>
<dbReference type="FunFam" id="3.40.50.1480:FF:000004">
    <property type="entry name" value="Adenosylhomocysteinase"/>
    <property type="match status" value="1"/>
</dbReference>
<dbReference type="FunFam" id="3.40.50.720:FF:000004">
    <property type="entry name" value="Adenosylhomocysteinase"/>
    <property type="match status" value="1"/>
</dbReference>
<dbReference type="Gene3D" id="3.40.50.1480">
    <property type="entry name" value="Adenosylhomocysteinase-like"/>
    <property type="match status" value="3"/>
</dbReference>
<dbReference type="Gene3D" id="3.40.50.720">
    <property type="entry name" value="NAD(P)-binding Rossmann-like Domain"/>
    <property type="match status" value="1"/>
</dbReference>
<dbReference type="HAMAP" id="MF_00563">
    <property type="entry name" value="AdoHcyase"/>
    <property type="match status" value="1"/>
</dbReference>
<dbReference type="InterPro" id="IPR042172">
    <property type="entry name" value="Adenosylhomocyst_ase-like_sf"/>
</dbReference>
<dbReference type="InterPro" id="IPR000043">
    <property type="entry name" value="Adenosylhomocysteinase-like"/>
</dbReference>
<dbReference type="InterPro" id="IPR015878">
    <property type="entry name" value="Ado_hCys_hydrolase_NAD-bd"/>
</dbReference>
<dbReference type="InterPro" id="IPR036291">
    <property type="entry name" value="NAD(P)-bd_dom_sf"/>
</dbReference>
<dbReference type="InterPro" id="IPR020082">
    <property type="entry name" value="S-Ado-L-homoCys_hydrolase_CS"/>
</dbReference>
<dbReference type="NCBIfam" id="TIGR00936">
    <property type="entry name" value="ahcY"/>
    <property type="match status" value="1"/>
</dbReference>
<dbReference type="NCBIfam" id="NF004005">
    <property type="entry name" value="PRK05476.2-3"/>
    <property type="match status" value="1"/>
</dbReference>
<dbReference type="PANTHER" id="PTHR23420">
    <property type="entry name" value="ADENOSYLHOMOCYSTEINASE"/>
    <property type="match status" value="1"/>
</dbReference>
<dbReference type="PANTHER" id="PTHR23420:SF0">
    <property type="entry name" value="ADENOSYLHOMOCYSTEINASE"/>
    <property type="match status" value="1"/>
</dbReference>
<dbReference type="Pfam" id="PF05221">
    <property type="entry name" value="AdoHcyase"/>
    <property type="match status" value="2"/>
</dbReference>
<dbReference type="Pfam" id="PF00670">
    <property type="entry name" value="AdoHcyase_NAD"/>
    <property type="match status" value="1"/>
</dbReference>
<dbReference type="PIRSF" id="PIRSF001109">
    <property type="entry name" value="Ad_hcy_hydrolase"/>
    <property type="match status" value="1"/>
</dbReference>
<dbReference type="SMART" id="SM00996">
    <property type="entry name" value="AdoHcyase"/>
    <property type="match status" value="1"/>
</dbReference>
<dbReference type="SMART" id="SM00997">
    <property type="entry name" value="AdoHcyase_NAD"/>
    <property type="match status" value="1"/>
</dbReference>
<dbReference type="SUPFAM" id="SSF52283">
    <property type="entry name" value="Formate/glycerate dehydrogenase catalytic domain-like"/>
    <property type="match status" value="1"/>
</dbReference>
<dbReference type="SUPFAM" id="SSF51735">
    <property type="entry name" value="NAD(P)-binding Rossmann-fold domains"/>
    <property type="match status" value="1"/>
</dbReference>
<dbReference type="PROSITE" id="PS00738">
    <property type="entry name" value="ADOHCYASE_1"/>
    <property type="match status" value="1"/>
</dbReference>
<dbReference type="PROSITE" id="PS00739">
    <property type="entry name" value="ADOHCYASE_2"/>
    <property type="match status" value="1"/>
</dbReference>
<accession>O76757</accession>
<accession>Q7QEC2</accession>